<evidence type="ECO:0000250" key="1"/>
<evidence type="ECO:0000250" key="2">
    <source>
        <dbReference type="UniProtKB" id="Q99K01"/>
    </source>
</evidence>
<evidence type="ECO:0000256" key="3">
    <source>
        <dbReference type="SAM" id="MobiDB-lite"/>
    </source>
</evidence>
<evidence type="ECO:0000269" key="4">
    <source>
    </source>
</evidence>
<evidence type="ECO:0000303" key="5">
    <source>
    </source>
</evidence>
<evidence type="ECO:0000303" key="6">
    <source>
    </source>
</evidence>
<evidence type="ECO:0000305" key="7"/>
<evidence type="ECO:0007744" key="8">
    <source>
    </source>
</evidence>
<evidence type="ECO:0007744" key="9">
    <source>
    </source>
</evidence>
<evidence type="ECO:0007744" key="10">
    <source>
    </source>
</evidence>
<evidence type="ECO:0007744" key="11">
    <source>
    </source>
</evidence>
<evidence type="ECO:0007744" key="12">
    <source>
    </source>
</evidence>
<evidence type="ECO:0007744" key="13">
    <source>
    </source>
</evidence>
<name>PDXD1_HUMAN</name>
<comment type="cofactor">
    <cofactor evidence="1">
        <name>pyridoxal 5'-phosphate</name>
        <dbReference type="ChEBI" id="CHEBI:597326"/>
    </cofactor>
</comment>
<comment type="alternative products">
    <event type="alternative splicing"/>
    <isoform>
        <id>Q6P996-1</id>
        <name>1</name>
        <sequence type="displayed"/>
    </isoform>
    <isoform>
        <id>Q6P996-2</id>
        <name>2</name>
        <sequence type="described" ref="VSP_027341 VSP_027342 VSP_027343"/>
    </isoform>
    <isoform>
        <id>Q6P996-3</id>
        <name>3</name>
        <sequence type="described" ref="VSP_055731 VSP_055733"/>
    </isoform>
    <isoform>
        <id>Q6P996-4</id>
        <name>4</name>
        <sequence type="described" ref="VSP_055732 VSP_055734"/>
    </isoform>
    <isoform>
        <id>Q6P996-5</id>
        <name>5</name>
        <sequence type="described" ref="VSP_055734"/>
    </isoform>
</comment>
<comment type="similarity">
    <text evidence="7">Belongs to the group II decarboxylase family.</text>
</comment>
<comment type="sequence caution" evidence="7">
    <conflict type="frameshift">
        <sequence resource="EMBL-CDS" id="AAH33748"/>
    </conflict>
</comment>
<comment type="sequence caution" evidence="7">
    <conflict type="frameshift">
        <sequence resource="EMBL-CDS" id="AAZ14099"/>
    </conflict>
</comment>
<comment type="sequence caution" evidence="7">
    <conflict type="erroneous initiation">
        <sequence resource="EMBL-CDS" id="BAA19780"/>
    </conflict>
    <text>Extended N-terminus.</text>
</comment>
<protein>
    <recommendedName>
        <fullName>Pyridoxal-dependent decarboxylase domain-containing protein 1</fullName>
        <ecNumber>4.1.1.-</ecNumber>
    </recommendedName>
</protein>
<dbReference type="EC" id="4.1.1.-"/>
<dbReference type="EMBL" id="D87438">
    <property type="protein sequence ID" value="BAA19780.1"/>
    <property type="status" value="ALT_INIT"/>
    <property type="molecule type" value="mRNA"/>
</dbReference>
<dbReference type="EMBL" id="AK299799">
    <property type="protein sequence ID" value="BAG61675.1"/>
    <property type="molecule type" value="mRNA"/>
</dbReference>
<dbReference type="EMBL" id="AK299111">
    <property type="protein sequence ID" value="BAG61167.1"/>
    <property type="molecule type" value="mRNA"/>
</dbReference>
<dbReference type="EMBL" id="AC138932">
    <property type="status" value="NOT_ANNOTATED_CDS"/>
    <property type="molecule type" value="Genomic_DNA"/>
</dbReference>
<dbReference type="EMBL" id="AC139256">
    <property type="status" value="NOT_ANNOTATED_CDS"/>
    <property type="molecule type" value="Genomic_DNA"/>
</dbReference>
<dbReference type="EMBL" id="BC025366">
    <property type="protein sequence ID" value="AAH25366.2"/>
    <property type="molecule type" value="mRNA"/>
</dbReference>
<dbReference type="EMBL" id="BC033748">
    <property type="protein sequence ID" value="AAH33748.1"/>
    <property type="status" value="ALT_FRAME"/>
    <property type="molecule type" value="mRNA"/>
</dbReference>
<dbReference type="EMBL" id="BC036520">
    <property type="protein sequence ID" value="AAH36520.1"/>
    <property type="molecule type" value="mRNA"/>
</dbReference>
<dbReference type="EMBL" id="BC042104">
    <property type="protein sequence ID" value="AAH42104.2"/>
    <property type="molecule type" value="mRNA"/>
</dbReference>
<dbReference type="EMBL" id="BC060871">
    <property type="protein sequence ID" value="AAH60871.1"/>
    <property type="molecule type" value="mRNA"/>
</dbReference>
<dbReference type="EMBL" id="DQ111782">
    <property type="protein sequence ID" value="AAZ14099.1"/>
    <property type="status" value="ALT_FRAME"/>
    <property type="molecule type" value="mRNA"/>
</dbReference>
<dbReference type="CCDS" id="CCDS32393.1">
    <molecule id="Q6P996-1"/>
</dbReference>
<dbReference type="CCDS" id="CCDS66954.1">
    <molecule id="Q6P996-5"/>
</dbReference>
<dbReference type="CCDS" id="CCDS66955.1">
    <molecule id="Q6P996-4"/>
</dbReference>
<dbReference type="CCDS" id="CCDS66957.1">
    <molecule id="Q6P996-3"/>
</dbReference>
<dbReference type="CCDS" id="CCDS73831.1">
    <molecule id="Q6P996-2"/>
</dbReference>
<dbReference type="RefSeq" id="NP_001272373.1">
    <molecule id="Q6P996-5"/>
    <property type="nucleotide sequence ID" value="NM_001285444.2"/>
</dbReference>
<dbReference type="RefSeq" id="NP_001272374.1">
    <molecule id="Q6P996-4"/>
    <property type="nucleotide sequence ID" value="NM_001285445.2"/>
</dbReference>
<dbReference type="RefSeq" id="NP_001272376.1">
    <property type="nucleotide sequence ID" value="NM_001285447.1"/>
</dbReference>
<dbReference type="RefSeq" id="NP_001272377.1">
    <molecule id="Q6P996-3"/>
    <property type="nucleotide sequence ID" value="NM_001285448.1"/>
</dbReference>
<dbReference type="RefSeq" id="NP_001272379.1">
    <molecule id="Q6P996-2"/>
    <property type="nucleotide sequence ID" value="NM_001285450.2"/>
</dbReference>
<dbReference type="RefSeq" id="NP_055842.2">
    <molecule id="Q6P996-1"/>
    <property type="nucleotide sequence ID" value="NM_015027.4"/>
</dbReference>
<dbReference type="RefSeq" id="XP_006725288.1">
    <property type="nucleotide sequence ID" value="XM_006725225.1"/>
</dbReference>
<dbReference type="RefSeq" id="XP_006725291.1">
    <property type="nucleotide sequence ID" value="XM_006725228.2"/>
</dbReference>
<dbReference type="RefSeq" id="XP_006726660.1">
    <property type="nucleotide sequence ID" value="XM_006726597.1"/>
</dbReference>
<dbReference type="RefSeq" id="XP_006726663.1">
    <property type="nucleotide sequence ID" value="XM_006726600.2"/>
</dbReference>
<dbReference type="SMR" id="Q6P996"/>
<dbReference type="BioGRID" id="116681">
    <property type="interactions" value="250"/>
</dbReference>
<dbReference type="FunCoup" id="Q6P996">
    <property type="interactions" value="3533"/>
</dbReference>
<dbReference type="IntAct" id="Q6P996">
    <property type="interactions" value="120"/>
</dbReference>
<dbReference type="MINT" id="Q6P996"/>
<dbReference type="STRING" id="9606.ENSP00000379691"/>
<dbReference type="GlyCosmos" id="Q6P996">
    <property type="glycosylation" value="2 sites, 1 glycan"/>
</dbReference>
<dbReference type="GlyGen" id="Q6P996">
    <property type="glycosylation" value="4 sites, 1 N-linked glycan (1 site), 1 O-linked glycan (2 sites)"/>
</dbReference>
<dbReference type="iPTMnet" id="Q6P996"/>
<dbReference type="MetOSite" id="Q6P996"/>
<dbReference type="PhosphoSitePlus" id="Q6P996"/>
<dbReference type="SwissPalm" id="Q6P996"/>
<dbReference type="BioMuta" id="PDXDC1"/>
<dbReference type="DMDM" id="156633546"/>
<dbReference type="jPOST" id="Q6P996"/>
<dbReference type="MassIVE" id="Q6P996"/>
<dbReference type="PaxDb" id="9606-ENSP00000379691"/>
<dbReference type="PeptideAtlas" id="Q6P996"/>
<dbReference type="ProteomicsDB" id="16941"/>
<dbReference type="ProteomicsDB" id="17384"/>
<dbReference type="ProteomicsDB" id="41339"/>
<dbReference type="ProteomicsDB" id="67028">
    <molecule id="Q6P996-1"/>
</dbReference>
<dbReference type="ProteomicsDB" id="67029">
    <molecule id="Q6P996-2"/>
</dbReference>
<dbReference type="Pumba" id="Q6P996"/>
<dbReference type="Antibodypedia" id="24937">
    <property type="antibodies" value="205 antibodies from 28 providers"/>
</dbReference>
<dbReference type="DNASU" id="23042"/>
<dbReference type="Ensembl" id="ENST00000396410.9">
    <molecule id="Q6P996-1"/>
    <property type="protein sequence ID" value="ENSP00000379691.4"/>
    <property type="gene ID" value="ENSG00000179889.21"/>
</dbReference>
<dbReference type="Ensembl" id="ENST00000450288.3">
    <molecule id="Q6P996-3"/>
    <property type="protein sequence ID" value="ENSP00000391147.3"/>
    <property type="gene ID" value="ENSG00000179889.21"/>
</dbReference>
<dbReference type="Ensembl" id="ENST00000455313.6">
    <molecule id="Q6P996-2"/>
    <property type="protein sequence ID" value="ENSP00000406703.2"/>
    <property type="gene ID" value="ENSG00000179889.21"/>
</dbReference>
<dbReference type="Ensembl" id="ENST00000569715.5">
    <molecule id="Q6P996-5"/>
    <property type="protein sequence ID" value="ENSP00000455070.1"/>
    <property type="gene ID" value="ENSG00000179889.21"/>
</dbReference>
<dbReference type="Ensembl" id="ENST00000613798.4">
    <molecule id="Q6P996-2"/>
    <property type="protein sequence ID" value="ENSP00000481784.1"/>
    <property type="gene ID" value="ENSG00000275498.5"/>
</dbReference>
<dbReference type="Ensembl" id="ENST00000614833.4">
    <molecule id="Q6P996-3"/>
    <property type="protein sequence ID" value="ENSP00000480418.1"/>
    <property type="gene ID" value="ENSG00000275498.5"/>
</dbReference>
<dbReference type="Ensembl" id="ENST00000618389.4">
    <molecule id="Q6P996-1"/>
    <property type="protein sequence ID" value="ENSP00000484595.1"/>
    <property type="gene ID" value="ENSG00000275498.5"/>
</dbReference>
<dbReference type="Ensembl" id="ENST00000619589.4">
    <molecule id="Q6P996-5"/>
    <property type="protein sequence ID" value="ENSP00000478686.1"/>
    <property type="gene ID" value="ENSG00000275498.5"/>
</dbReference>
<dbReference type="Ensembl" id="ENST00000627450.2">
    <molecule id="Q6P996-4"/>
    <property type="protein sequence ID" value="ENSP00000486662.1"/>
    <property type="gene ID" value="ENSG00000179889.21"/>
</dbReference>
<dbReference type="Ensembl" id="ENST00000631842.1">
    <molecule id="Q6P996-4"/>
    <property type="protein sequence ID" value="ENSP00000488664.1"/>
    <property type="gene ID" value="ENSG00000275498.5"/>
</dbReference>
<dbReference type="GeneID" id="23042"/>
<dbReference type="KEGG" id="hsa:23042"/>
<dbReference type="MANE-Select" id="ENST00000396410.9">
    <property type="protein sequence ID" value="ENSP00000379691.4"/>
    <property type="RefSeq nucleotide sequence ID" value="NM_015027.4"/>
    <property type="RefSeq protein sequence ID" value="NP_055842.2"/>
</dbReference>
<dbReference type="UCSC" id="uc002dcz.5">
    <molecule id="Q6P996-1"/>
    <property type="organism name" value="human"/>
</dbReference>
<dbReference type="AGR" id="HGNC:28995"/>
<dbReference type="CTD" id="23042"/>
<dbReference type="DisGeNET" id="23042"/>
<dbReference type="GeneCards" id="PDXDC1"/>
<dbReference type="HGNC" id="HGNC:28995">
    <property type="gene designation" value="PDXDC1"/>
</dbReference>
<dbReference type="HPA" id="ENSG00000179889">
    <property type="expression patterns" value="Low tissue specificity"/>
</dbReference>
<dbReference type="MIM" id="614244">
    <property type="type" value="gene"/>
</dbReference>
<dbReference type="neXtProt" id="NX_Q6P996"/>
<dbReference type="OpenTargets" id="ENSG00000179889"/>
<dbReference type="PharmGKB" id="PA162399182"/>
<dbReference type="VEuPathDB" id="HostDB:ENSG00000179889"/>
<dbReference type="eggNOG" id="KOG0630">
    <property type="taxonomic scope" value="Eukaryota"/>
</dbReference>
<dbReference type="GeneTree" id="ENSGT00390000009628"/>
<dbReference type="HOGENOM" id="CLU_014327_0_0_1"/>
<dbReference type="InParanoid" id="Q6P996"/>
<dbReference type="OMA" id="RLQYACR"/>
<dbReference type="OrthoDB" id="2161780at2759"/>
<dbReference type="PAN-GO" id="Q6P996">
    <property type="GO annotations" value="1 GO annotation based on evolutionary models"/>
</dbReference>
<dbReference type="PhylomeDB" id="Q6P996"/>
<dbReference type="TreeFam" id="TF313101"/>
<dbReference type="PathwayCommons" id="Q6P996"/>
<dbReference type="SignaLink" id="Q6P996"/>
<dbReference type="SIGNOR" id="Q6P996"/>
<dbReference type="BioGRID-ORCS" id="102724985">
    <property type="hits" value="1 hit in 3 CRISPR screens"/>
</dbReference>
<dbReference type="BioGRID-ORCS" id="23042">
    <property type="hits" value="29 hits in 1155 CRISPR screens"/>
</dbReference>
<dbReference type="ChiTaRS" id="PDXDC1">
    <property type="organism name" value="human"/>
</dbReference>
<dbReference type="Pharos" id="Q6P996">
    <property type="development level" value="Tbio"/>
</dbReference>
<dbReference type="PRO" id="PR:Q6P996"/>
<dbReference type="Proteomes" id="UP000005640">
    <property type="component" value="Chromosome 16"/>
</dbReference>
<dbReference type="RNAct" id="Q6P996">
    <property type="molecule type" value="protein"/>
</dbReference>
<dbReference type="Bgee" id="ENSG00000179889">
    <property type="expression patterns" value="Expressed in rectum and 116 other cell types or tissues"/>
</dbReference>
<dbReference type="ExpressionAtlas" id="Q6P996">
    <property type="expression patterns" value="baseline and differential"/>
</dbReference>
<dbReference type="GO" id="GO:0005794">
    <property type="term" value="C:Golgi apparatus"/>
    <property type="evidence" value="ECO:0000314"/>
    <property type="project" value="HPA"/>
</dbReference>
<dbReference type="GO" id="GO:0043231">
    <property type="term" value="C:intracellular membrane-bounded organelle"/>
    <property type="evidence" value="ECO:0000314"/>
    <property type="project" value="HPA"/>
</dbReference>
<dbReference type="GO" id="GO:0045296">
    <property type="term" value="F:cadherin binding"/>
    <property type="evidence" value="ECO:0007005"/>
    <property type="project" value="BHF-UCL"/>
</dbReference>
<dbReference type="GO" id="GO:0016831">
    <property type="term" value="F:carboxy-lyase activity"/>
    <property type="evidence" value="ECO:0007669"/>
    <property type="project" value="UniProtKB-KW"/>
</dbReference>
<dbReference type="GO" id="GO:0030170">
    <property type="term" value="F:pyridoxal phosphate binding"/>
    <property type="evidence" value="ECO:0007669"/>
    <property type="project" value="InterPro"/>
</dbReference>
<dbReference type="GO" id="GO:0019752">
    <property type="term" value="P:carboxylic acid metabolic process"/>
    <property type="evidence" value="ECO:0007669"/>
    <property type="project" value="InterPro"/>
</dbReference>
<dbReference type="FunFam" id="3.40.640.10:FF:000036">
    <property type="entry name" value="pyridoxal-dependent decarboxylase domain-containing protein 1 isoform X2"/>
    <property type="match status" value="1"/>
</dbReference>
<dbReference type="FunFam" id="3.90.1150.170:FF:000002">
    <property type="entry name" value="pyridoxal-dependent decarboxylase domain-containing protein 1 isoform X2"/>
    <property type="match status" value="1"/>
</dbReference>
<dbReference type="Gene3D" id="3.90.1150.170">
    <property type="match status" value="1"/>
</dbReference>
<dbReference type="Gene3D" id="3.40.640.10">
    <property type="entry name" value="Type I PLP-dependent aspartate aminotransferase-like (Major domain)"/>
    <property type="match status" value="1"/>
</dbReference>
<dbReference type="InterPro" id="IPR050477">
    <property type="entry name" value="GrpII_AminoAcid_Decarb"/>
</dbReference>
<dbReference type="InterPro" id="IPR055103">
    <property type="entry name" value="PDXDC1-like_2nd"/>
</dbReference>
<dbReference type="InterPro" id="IPR055102">
    <property type="entry name" value="PDXDC1-like_3rd"/>
</dbReference>
<dbReference type="InterPro" id="IPR002129">
    <property type="entry name" value="PyrdxlP-dep_de-COase"/>
</dbReference>
<dbReference type="InterPro" id="IPR015424">
    <property type="entry name" value="PyrdxlP-dep_Trfase"/>
</dbReference>
<dbReference type="InterPro" id="IPR015421">
    <property type="entry name" value="PyrdxlP-dep_Trfase_major"/>
</dbReference>
<dbReference type="PANTHER" id="PTHR42735">
    <property type="match status" value="1"/>
</dbReference>
<dbReference type="PANTHER" id="PTHR42735:SF1">
    <property type="entry name" value="PYRIDOXAL-DEPENDENT DECARBOXYLASE DOMAIN-CONTAINING PROTEIN 1-RELATED"/>
    <property type="match status" value="1"/>
</dbReference>
<dbReference type="Pfam" id="PF22930">
    <property type="entry name" value="PDXDC1-like_cen"/>
    <property type="match status" value="1"/>
</dbReference>
<dbReference type="Pfam" id="PF22937">
    <property type="entry name" value="PDXDC1-like_cen2"/>
    <property type="match status" value="1"/>
</dbReference>
<dbReference type="Pfam" id="PF00282">
    <property type="entry name" value="Pyridoxal_deC"/>
    <property type="match status" value="1"/>
</dbReference>
<dbReference type="SUPFAM" id="SSF53383">
    <property type="entry name" value="PLP-dependent transferases"/>
    <property type="match status" value="1"/>
</dbReference>
<feature type="chain" id="PRO_0000297677" description="Pyridoxal-dependent decarboxylase domain-containing protein 1">
    <location>
        <begin position="1"/>
        <end position="788"/>
    </location>
</feature>
<feature type="region of interest" description="Disordered" evidence="3">
    <location>
        <begin position="28"/>
        <end position="51"/>
    </location>
</feature>
<feature type="region of interest" description="Disordered" evidence="3">
    <location>
        <begin position="684"/>
        <end position="788"/>
    </location>
</feature>
<feature type="compositionally biased region" description="Basic and acidic residues" evidence="3">
    <location>
        <begin position="28"/>
        <end position="40"/>
    </location>
</feature>
<feature type="compositionally biased region" description="Basic and acidic residues" evidence="3">
    <location>
        <begin position="725"/>
        <end position="734"/>
    </location>
</feature>
<feature type="compositionally biased region" description="Polar residues" evidence="3">
    <location>
        <begin position="738"/>
        <end position="750"/>
    </location>
</feature>
<feature type="compositionally biased region" description="Basic and acidic residues" evidence="3">
    <location>
        <begin position="772"/>
        <end position="788"/>
    </location>
</feature>
<feature type="modified residue" description="Phosphothreonine" evidence="12">
    <location>
        <position position="414"/>
    </location>
</feature>
<feature type="modified residue" description="Phosphoserine" evidence="10">
    <location>
        <position position="652"/>
    </location>
</feature>
<feature type="modified residue" description="Phosphothreonine" evidence="2">
    <location>
        <position position="687"/>
    </location>
</feature>
<feature type="modified residue" description="Phosphothreonine" evidence="8">
    <location>
        <position position="691"/>
    </location>
</feature>
<feature type="modified residue" description="Phosphoserine" evidence="11 12">
    <location>
        <position position="710"/>
    </location>
</feature>
<feature type="modified residue" description="Phosphoserine" evidence="10 12">
    <location>
        <position position="718"/>
    </location>
</feature>
<feature type="modified residue" description="Phosphoserine" evidence="12">
    <location>
        <position position="722"/>
    </location>
</feature>
<feature type="modified residue" description="Phosphoserine" evidence="2">
    <location>
        <position position="748"/>
    </location>
</feature>
<feature type="modified residue" description="Phosphoserine" evidence="9">
    <location>
        <position position="757"/>
    </location>
</feature>
<feature type="modified residue" description="Phosphoserine" evidence="12">
    <location>
        <position position="779"/>
    </location>
</feature>
<feature type="modified residue" description="Phosphoserine" evidence="12 13">
    <location>
        <position position="786"/>
    </location>
</feature>
<feature type="splice variant" id="VSP_055731" description="In isoform 3." evidence="5">
    <location>
        <begin position="1"/>
        <end position="15"/>
    </location>
</feature>
<feature type="splice variant" id="VSP_055732" description="In isoform 4." evidence="5">
    <location>
        <position position="32"/>
    </location>
</feature>
<feature type="splice variant" id="VSP_055733" description="In isoform 3." evidence="5">
    <location>
        <begin position="54"/>
        <end position="129"/>
    </location>
</feature>
<feature type="splice variant" id="VSP_055734" description="In isoform 4 and isoform 5." evidence="5">
    <location>
        <begin position="54"/>
        <end position="80"/>
    </location>
</feature>
<feature type="splice variant" id="VSP_027341" description="In isoform 2." evidence="6">
    <location>
        <begin position="194"/>
        <end position="216"/>
    </location>
</feature>
<feature type="splice variant" id="VSP_027342" description="In isoform 2." evidence="6">
    <original>LGEQLKQLVPASGLTVMDLEA</original>
    <variation>VRMAVTPLSFQVPVHHHPTCW</variation>
    <location>
        <begin position="432"/>
        <end position="452"/>
    </location>
</feature>
<feature type="splice variant" id="VSP_027343" description="In isoform 2." evidence="6">
    <location>
        <begin position="453"/>
        <end position="788"/>
    </location>
</feature>
<feature type="sequence variant" id="VAR_059252" description="In dbSNP:rs4985162." evidence="4">
    <original>P</original>
    <variation>L</variation>
    <location>
        <position position="301"/>
    </location>
</feature>
<feature type="sequence conflict" description="In Ref. 2; BAG61167." evidence="7" ref="2">
    <original>E</original>
    <variation>G</variation>
    <location>
        <position position="37"/>
    </location>
</feature>
<feature type="sequence conflict" description="In Ref. 5; AAZ14099." evidence="7" ref="5">
    <original>G</original>
    <variation>V</variation>
    <location>
        <position position="53"/>
    </location>
</feature>
<feature type="sequence conflict" description="In Ref. 2; BAG61167 and 5; AAZ14099." evidence="7" ref="2 5">
    <original>I</original>
    <variation>M</variation>
    <location>
        <position position="82"/>
    </location>
</feature>
<feature type="sequence conflict" description="In Ref. 5; AAZ14099." evidence="7" ref="5">
    <original>T</original>
    <variation>A</variation>
    <location>
        <position position="114"/>
    </location>
</feature>
<feature type="sequence conflict" description="In Ref. 5; AAZ14099." evidence="7" ref="5">
    <original>L</original>
    <variation>F</variation>
    <location>
        <position position="178"/>
    </location>
</feature>
<feature type="sequence conflict" description="In Ref. 4; AAH60871." evidence="7" ref="4">
    <original>K</original>
    <variation>E</variation>
    <location>
        <position position="373"/>
    </location>
</feature>
<feature type="sequence conflict" description="In Ref. 2; BAG61675." evidence="7" ref="2">
    <original>T</original>
    <variation>A</variation>
    <location>
        <position position="749"/>
    </location>
</feature>
<keyword id="KW-0025">Alternative splicing</keyword>
<keyword id="KW-0210">Decarboxylase</keyword>
<keyword id="KW-0456">Lyase</keyword>
<keyword id="KW-0597">Phosphoprotein</keyword>
<keyword id="KW-1267">Proteomics identification</keyword>
<keyword id="KW-0663">Pyridoxal phosphate</keyword>
<keyword id="KW-1185">Reference proteome</keyword>
<accession>Q6P996</accession>
<accession>B4DR55</accession>
<accession>B4DSL3</accession>
<accession>E7EMH5</accession>
<accession>E7EPL4</accession>
<accession>H3BNZ1</accession>
<accession>O00236</accession>
<accession>Q4F6X7</accession>
<accession>Q6PID7</accession>
<accession>Q86YF1</accession>
<accession>Q8N4Q9</accession>
<accession>Q8TBS5</accession>
<reference key="1">
    <citation type="journal article" date="1996" name="DNA Res.">
        <title>Prediction of the coding sequences of unidentified human genes. VI. The coding sequences of 80 new genes (KIAA0201-KIAA0280) deduced by analysis of cDNA clones from cell line KG-1 and brain.</title>
        <authorList>
            <person name="Nagase T."/>
            <person name="Seki N."/>
            <person name="Ishikawa K."/>
            <person name="Ohira M."/>
            <person name="Kawarabayasi Y."/>
            <person name="Ohara O."/>
            <person name="Tanaka A."/>
            <person name="Kotani H."/>
            <person name="Miyajima N."/>
            <person name="Nomura N."/>
        </authorList>
    </citation>
    <scope>NUCLEOTIDE SEQUENCE [LARGE SCALE MRNA] (ISOFORM 1)</scope>
    <source>
        <tissue>Bone marrow</tissue>
    </source>
</reference>
<reference key="2">
    <citation type="journal article" date="2004" name="Nat. Genet.">
        <title>Complete sequencing and characterization of 21,243 full-length human cDNAs.</title>
        <authorList>
            <person name="Ota T."/>
            <person name="Suzuki Y."/>
            <person name="Nishikawa T."/>
            <person name="Otsuki T."/>
            <person name="Sugiyama T."/>
            <person name="Irie R."/>
            <person name="Wakamatsu A."/>
            <person name="Hayashi K."/>
            <person name="Sato H."/>
            <person name="Nagai K."/>
            <person name="Kimura K."/>
            <person name="Makita H."/>
            <person name="Sekine M."/>
            <person name="Obayashi M."/>
            <person name="Nishi T."/>
            <person name="Shibahara T."/>
            <person name="Tanaka T."/>
            <person name="Ishii S."/>
            <person name="Yamamoto J."/>
            <person name="Saito K."/>
            <person name="Kawai Y."/>
            <person name="Isono Y."/>
            <person name="Nakamura Y."/>
            <person name="Nagahari K."/>
            <person name="Murakami K."/>
            <person name="Yasuda T."/>
            <person name="Iwayanagi T."/>
            <person name="Wagatsuma M."/>
            <person name="Shiratori A."/>
            <person name="Sudo H."/>
            <person name="Hosoiri T."/>
            <person name="Kaku Y."/>
            <person name="Kodaira H."/>
            <person name="Kondo H."/>
            <person name="Sugawara M."/>
            <person name="Takahashi M."/>
            <person name="Kanda K."/>
            <person name="Yokoi T."/>
            <person name="Furuya T."/>
            <person name="Kikkawa E."/>
            <person name="Omura Y."/>
            <person name="Abe K."/>
            <person name="Kamihara K."/>
            <person name="Katsuta N."/>
            <person name="Sato K."/>
            <person name="Tanikawa M."/>
            <person name="Yamazaki M."/>
            <person name="Ninomiya K."/>
            <person name="Ishibashi T."/>
            <person name="Yamashita H."/>
            <person name="Murakawa K."/>
            <person name="Fujimori K."/>
            <person name="Tanai H."/>
            <person name="Kimata M."/>
            <person name="Watanabe M."/>
            <person name="Hiraoka S."/>
            <person name="Chiba Y."/>
            <person name="Ishida S."/>
            <person name="Ono Y."/>
            <person name="Takiguchi S."/>
            <person name="Watanabe S."/>
            <person name="Yosida M."/>
            <person name="Hotuta T."/>
            <person name="Kusano J."/>
            <person name="Kanehori K."/>
            <person name="Takahashi-Fujii A."/>
            <person name="Hara H."/>
            <person name="Tanase T.-O."/>
            <person name="Nomura Y."/>
            <person name="Togiya S."/>
            <person name="Komai F."/>
            <person name="Hara R."/>
            <person name="Takeuchi K."/>
            <person name="Arita M."/>
            <person name="Imose N."/>
            <person name="Musashino K."/>
            <person name="Yuuki H."/>
            <person name="Oshima A."/>
            <person name="Sasaki N."/>
            <person name="Aotsuka S."/>
            <person name="Yoshikawa Y."/>
            <person name="Matsunawa H."/>
            <person name="Ichihara T."/>
            <person name="Shiohata N."/>
            <person name="Sano S."/>
            <person name="Moriya S."/>
            <person name="Momiyama H."/>
            <person name="Satoh N."/>
            <person name="Takami S."/>
            <person name="Terashima Y."/>
            <person name="Suzuki O."/>
            <person name="Nakagawa S."/>
            <person name="Senoh A."/>
            <person name="Mizoguchi H."/>
            <person name="Goto Y."/>
            <person name="Shimizu F."/>
            <person name="Wakebe H."/>
            <person name="Hishigaki H."/>
            <person name="Watanabe T."/>
            <person name="Sugiyama A."/>
            <person name="Takemoto M."/>
            <person name="Kawakami B."/>
            <person name="Yamazaki M."/>
            <person name="Watanabe K."/>
            <person name="Kumagai A."/>
            <person name="Itakura S."/>
            <person name="Fukuzumi Y."/>
            <person name="Fujimori Y."/>
            <person name="Komiyama M."/>
            <person name="Tashiro H."/>
            <person name="Tanigami A."/>
            <person name="Fujiwara T."/>
            <person name="Ono T."/>
            <person name="Yamada K."/>
            <person name="Fujii Y."/>
            <person name="Ozaki K."/>
            <person name="Hirao M."/>
            <person name="Ohmori Y."/>
            <person name="Kawabata A."/>
            <person name="Hikiji T."/>
            <person name="Kobatake N."/>
            <person name="Inagaki H."/>
            <person name="Ikema Y."/>
            <person name="Okamoto S."/>
            <person name="Okitani R."/>
            <person name="Kawakami T."/>
            <person name="Noguchi S."/>
            <person name="Itoh T."/>
            <person name="Shigeta K."/>
            <person name="Senba T."/>
            <person name="Matsumura K."/>
            <person name="Nakajima Y."/>
            <person name="Mizuno T."/>
            <person name="Morinaga M."/>
            <person name="Sasaki M."/>
            <person name="Togashi T."/>
            <person name="Oyama M."/>
            <person name="Hata H."/>
            <person name="Watanabe M."/>
            <person name="Komatsu T."/>
            <person name="Mizushima-Sugano J."/>
            <person name="Satoh T."/>
            <person name="Shirai Y."/>
            <person name="Takahashi Y."/>
            <person name="Nakagawa K."/>
            <person name="Okumura K."/>
            <person name="Nagase T."/>
            <person name="Nomura N."/>
            <person name="Kikuchi H."/>
            <person name="Masuho Y."/>
            <person name="Yamashita R."/>
            <person name="Nakai K."/>
            <person name="Yada T."/>
            <person name="Nakamura Y."/>
            <person name="Ohara O."/>
            <person name="Isogai T."/>
            <person name="Sugano S."/>
        </authorList>
    </citation>
    <scope>NUCLEOTIDE SEQUENCE [LARGE SCALE MRNA] (ISOFORMS 3 AND 4)</scope>
    <scope>VARIANT LEU-301</scope>
    <source>
        <tissue>Brain</tissue>
        <tissue>Teratocarcinoma</tissue>
    </source>
</reference>
<reference key="3">
    <citation type="journal article" date="2004" name="Nature">
        <title>The sequence and analysis of duplication-rich human chromosome 16.</title>
        <authorList>
            <person name="Martin J."/>
            <person name="Han C."/>
            <person name="Gordon L.A."/>
            <person name="Terry A."/>
            <person name="Prabhakar S."/>
            <person name="She X."/>
            <person name="Xie G."/>
            <person name="Hellsten U."/>
            <person name="Chan Y.M."/>
            <person name="Altherr M."/>
            <person name="Couronne O."/>
            <person name="Aerts A."/>
            <person name="Bajorek E."/>
            <person name="Black S."/>
            <person name="Blumer H."/>
            <person name="Branscomb E."/>
            <person name="Brown N.C."/>
            <person name="Bruno W.J."/>
            <person name="Buckingham J.M."/>
            <person name="Callen D.F."/>
            <person name="Campbell C.S."/>
            <person name="Campbell M.L."/>
            <person name="Campbell E.W."/>
            <person name="Caoile C."/>
            <person name="Challacombe J.F."/>
            <person name="Chasteen L.A."/>
            <person name="Chertkov O."/>
            <person name="Chi H.C."/>
            <person name="Christensen M."/>
            <person name="Clark L.M."/>
            <person name="Cohn J.D."/>
            <person name="Denys M."/>
            <person name="Detter J.C."/>
            <person name="Dickson M."/>
            <person name="Dimitrijevic-Bussod M."/>
            <person name="Escobar J."/>
            <person name="Fawcett J.J."/>
            <person name="Flowers D."/>
            <person name="Fotopulos D."/>
            <person name="Glavina T."/>
            <person name="Gomez M."/>
            <person name="Gonzales E."/>
            <person name="Goodstein D."/>
            <person name="Goodwin L.A."/>
            <person name="Grady D.L."/>
            <person name="Grigoriev I."/>
            <person name="Groza M."/>
            <person name="Hammon N."/>
            <person name="Hawkins T."/>
            <person name="Haydu L."/>
            <person name="Hildebrand C.E."/>
            <person name="Huang W."/>
            <person name="Israni S."/>
            <person name="Jett J."/>
            <person name="Jewett P.B."/>
            <person name="Kadner K."/>
            <person name="Kimball H."/>
            <person name="Kobayashi A."/>
            <person name="Krawczyk M.-C."/>
            <person name="Leyba T."/>
            <person name="Longmire J.L."/>
            <person name="Lopez F."/>
            <person name="Lou Y."/>
            <person name="Lowry S."/>
            <person name="Ludeman T."/>
            <person name="Manohar C.F."/>
            <person name="Mark G.A."/>
            <person name="McMurray K.L."/>
            <person name="Meincke L.J."/>
            <person name="Morgan J."/>
            <person name="Moyzis R.K."/>
            <person name="Mundt M.O."/>
            <person name="Munk A.C."/>
            <person name="Nandkeshwar R.D."/>
            <person name="Pitluck S."/>
            <person name="Pollard M."/>
            <person name="Predki P."/>
            <person name="Parson-Quintana B."/>
            <person name="Ramirez L."/>
            <person name="Rash S."/>
            <person name="Retterer J."/>
            <person name="Ricke D.O."/>
            <person name="Robinson D.L."/>
            <person name="Rodriguez A."/>
            <person name="Salamov A."/>
            <person name="Saunders E.H."/>
            <person name="Scott D."/>
            <person name="Shough T."/>
            <person name="Stallings R.L."/>
            <person name="Stalvey M."/>
            <person name="Sutherland R.D."/>
            <person name="Tapia R."/>
            <person name="Tesmer J.G."/>
            <person name="Thayer N."/>
            <person name="Thompson L.S."/>
            <person name="Tice H."/>
            <person name="Torney D.C."/>
            <person name="Tran-Gyamfi M."/>
            <person name="Tsai M."/>
            <person name="Ulanovsky L.E."/>
            <person name="Ustaszewska A."/>
            <person name="Vo N."/>
            <person name="White P.S."/>
            <person name="Williams A.L."/>
            <person name="Wills P.L."/>
            <person name="Wu J.-R."/>
            <person name="Wu K."/>
            <person name="Yang J."/>
            <person name="DeJong P."/>
            <person name="Bruce D."/>
            <person name="Doggett N.A."/>
            <person name="Deaven L."/>
            <person name="Schmutz J."/>
            <person name="Grimwood J."/>
            <person name="Richardson P."/>
            <person name="Rokhsar D.S."/>
            <person name="Eichler E.E."/>
            <person name="Gilna P."/>
            <person name="Lucas S.M."/>
            <person name="Myers R.M."/>
            <person name="Rubin E.M."/>
            <person name="Pennacchio L.A."/>
        </authorList>
    </citation>
    <scope>NUCLEOTIDE SEQUENCE [LARGE SCALE GENOMIC DNA]</scope>
</reference>
<reference key="4">
    <citation type="journal article" date="2004" name="Genome Res.">
        <title>The status, quality, and expansion of the NIH full-length cDNA project: the Mammalian Gene Collection (MGC).</title>
        <authorList>
            <consortium name="The MGC Project Team"/>
        </authorList>
    </citation>
    <scope>NUCLEOTIDE SEQUENCE [LARGE SCALE MRNA] (ISOFORMS 1 AND 2)</scope>
    <source>
        <tissue>Brain</tissue>
        <tissue>Cervix</tissue>
        <tissue>Lung</tissue>
        <tissue>Placenta</tissue>
        <tissue>Testis</tissue>
    </source>
</reference>
<reference key="5">
    <citation type="submission" date="2005-06" db="EMBL/GenBank/DDBJ databases">
        <authorList>
            <person name="Li H."/>
            <person name="Nong W."/>
            <person name="Zhou G."/>
            <person name="Ke R."/>
            <person name="Shen C."/>
            <person name="Zhong G."/>
            <person name="Zheng Z."/>
            <person name="Liang M."/>
            <person name="Wen S."/>
            <person name="Lin L."/>
            <person name="Yang S."/>
        </authorList>
    </citation>
    <scope>NUCLEOTIDE SEQUENCE [LARGE SCALE MRNA] OF 1-371 (ISOFORM 1)</scope>
</reference>
<reference key="6">
    <citation type="journal article" date="2006" name="Cell">
        <title>Global, in vivo, and site-specific phosphorylation dynamics in signaling networks.</title>
        <authorList>
            <person name="Olsen J.V."/>
            <person name="Blagoev B."/>
            <person name="Gnad F."/>
            <person name="Macek B."/>
            <person name="Kumar C."/>
            <person name="Mortensen P."/>
            <person name="Mann M."/>
        </authorList>
    </citation>
    <scope>IDENTIFICATION BY MASS SPECTROMETRY [LARGE SCALE ANALYSIS]</scope>
    <source>
        <tissue>Cervix carcinoma</tissue>
    </source>
</reference>
<reference key="7">
    <citation type="journal article" date="2006" name="Nat. Biotechnol.">
        <title>A probability-based approach for high-throughput protein phosphorylation analysis and site localization.</title>
        <authorList>
            <person name="Beausoleil S.A."/>
            <person name="Villen J."/>
            <person name="Gerber S.A."/>
            <person name="Rush J."/>
            <person name="Gygi S.P."/>
        </authorList>
    </citation>
    <scope>PHOSPHORYLATION [LARGE SCALE ANALYSIS] AT THR-691</scope>
    <scope>IDENTIFICATION BY MASS SPECTROMETRY [LARGE SCALE ANALYSIS]</scope>
    <source>
        <tissue>Cervix carcinoma</tissue>
    </source>
</reference>
<reference key="8">
    <citation type="journal article" date="2008" name="Proc. Natl. Acad. Sci. U.S.A.">
        <title>A quantitative atlas of mitotic phosphorylation.</title>
        <authorList>
            <person name="Dephoure N."/>
            <person name="Zhou C."/>
            <person name="Villen J."/>
            <person name="Beausoleil S.A."/>
            <person name="Bakalarski C.E."/>
            <person name="Elledge S.J."/>
            <person name="Gygi S.P."/>
        </authorList>
    </citation>
    <scope>PHOSPHORYLATION [LARGE SCALE ANALYSIS] AT SER-757</scope>
    <scope>IDENTIFICATION BY MASS SPECTROMETRY [LARGE SCALE ANALYSIS]</scope>
    <source>
        <tissue>Cervix carcinoma</tissue>
    </source>
</reference>
<reference key="9">
    <citation type="journal article" date="2010" name="Sci. Signal.">
        <title>Quantitative phosphoproteomics reveals widespread full phosphorylation site occupancy during mitosis.</title>
        <authorList>
            <person name="Olsen J.V."/>
            <person name="Vermeulen M."/>
            <person name="Santamaria A."/>
            <person name="Kumar C."/>
            <person name="Miller M.L."/>
            <person name="Jensen L.J."/>
            <person name="Gnad F."/>
            <person name="Cox J."/>
            <person name="Jensen T.S."/>
            <person name="Nigg E.A."/>
            <person name="Brunak S."/>
            <person name="Mann M."/>
        </authorList>
    </citation>
    <scope>PHOSPHORYLATION [LARGE SCALE ANALYSIS] AT SER-652 AND SER-718</scope>
    <scope>IDENTIFICATION BY MASS SPECTROMETRY [LARGE SCALE ANALYSIS]</scope>
    <source>
        <tissue>Cervix carcinoma</tissue>
    </source>
</reference>
<reference key="10">
    <citation type="journal article" date="2011" name="BMC Syst. Biol.">
        <title>Initial characterization of the human central proteome.</title>
        <authorList>
            <person name="Burkard T.R."/>
            <person name="Planyavsky M."/>
            <person name="Kaupe I."/>
            <person name="Breitwieser F.P."/>
            <person name="Buerckstuemmer T."/>
            <person name="Bennett K.L."/>
            <person name="Superti-Furga G."/>
            <person name="Colinge J."/>
        </authorList>
    </citation>
    <scope>IDENTIFICATION BY MASS SPECTROMETRY [LARGE SCALE ANALYSIS]</scope>
</reference>
<reference key="11">
    <citation type="journal article" date="2011" name="Sci. Signal.">
        <title>System-wide temporal characterization of the proteome and phosphoproteome of human embryonic stem cell differentiation.</title>
        <authorList>
            <person name="Rigbolt K.T."/>
            <person name="Prokhorova T.A."/>
            <person name="Akimov V."/>
            <person name="Henningsen J."/>
            <person name="Johansen P.T."/>
            <person name="Kratchmarova I."/>
            <person name="Kassem M."/>
            <person name="Mann M."/>
            <person name="Olsen J.V."/>
            <person name="Blagoev B."/>
        </authorList>
    </citation>
    <scope>PHOSPHORYLATION [LARGE SCALE ANALYSIS] AT SER-710</scope>
    <scope>IDENTIFICATION BY MASS SPECTROMETRY [LARGE SCALE ANALYSIS]</scope>
</reference>
<reference key="12">
    <citation type="journal article" date="2013" name="J. Proteome Res.">
        <title>Toward a comprehensive characterization of a human cancer cell phosphoproteome.</title>
        <authorList>
            <person name="Zhou H."/>
            <person name="Di Palma S."/>
            <person name="Preisinger C."/>
            <person name="Peng M."/>
            <person name="Polat A.N."/>
            <person name="Heck A.J."/>
            <person name="Mohammed S."/>
        </authorList>
    </citation>
    <scope>PHOSPHORYLATION [LARGE SCALE ANALYSIS] AT THR-414; SER-710; SER-718; SER-722; SER-779 AND SER-786</scope>
    <scope>IDENTIFICATION BY MASS SPECTROMETRY [LARGE SCALE ANALYSIS]</scope>
    <source>
        <tissue>Cervix carcinoma</tissue>
        <tissue>Erythroleukemia</tissue>
    </source>
</reference>
<reference key="13">
    <citation type="journal article" date="2014" name="J. Proteomics">
        <title>An enzyme assisted RP-RPLC approach for in-depth analysis of human liver phosphoproteome.</title>
        <authorList>
            <person name="Bian Y."/>
            <person name="Song C."/>
            <person name="Cheng K."/>
            <person name="Dong M."/>
            <person name="Wang F."/>
            <person name="Huang J."/>
            <person name="Sun D."/>
            <person name="Wang L."/>
            <person name="Ye M."/>
            <person name="Zou H."/>
        </authorList>
    </citation>
    <scope>PHOSPHORYLATION [LARGE SCALE ANALYSIS] AT SER-786</scope>
    <scope>IDENTIFICATION BY MASS SPECTROMETRY [LARGE SCALE ANALYSIS]</scope>
    <source>
        <tissue>Liver</tissue>
    </source>
</reference>
<gene>
    <name type="primary">PDXDC1</name>
    <name type="synonym">KIAA0251</name>
</gene>
<sequence>MDASLEKIADPTLAEMGKNLKEAVKMLEDSQRRTEEENGKKLISGDIPGPLQGSGQDMVSILQLVQNLMHGDEDEEPQSPRIQNIGEQGHMALLGHSLGAYISTLDKEKLRKLTTRILSDTTLWLCRIFRYENGCAYFHEEEREGLAKICRLAIHSRYEDFVVDGFNVLYNKKPVIYLSAAARPGLGQYLCNQLGLPFPCLCRVPCNTVFGSQHQMDVAFLEKLIKDDIERGRLPLLLVANAGTAAVGHTDKIGRLKELCEQYGIWLHVEGVNLATLALGYVSSSVLAAAKCDSMTMTPGPWLGLPAVPAVTLYKHDDPALTLVAGLTSNKPTDKLRALPLWLSLQYLGLDGFVERIKHACQLSQRLQESLKKVNYIKILVEDELSSPVVVFRFFQELPGSDPVFKAVPVPNMTPSGVGRERHSCDALNRWLGEQLKQLVPASGLTVMDLEAEGTCLRFSPLMTAAVLGTRGEDVDQLVACIESKLPVLCCTLQLREEFKQEVEATAGLLYVDDPNWSGIGVVRYEHANDDKSSLKSDPEGENIHAGLLKKLNELESDLTFKIGPEYKSMKSCLYVGMASDNVDAAELVETIAATAREIEENSRLLENMTEVVRKGIQEAQVELQKASEERLLEEGVLRQIPVVGSVLNWFSPVQALQKGRTFNLTAGSLESTEPIYVYKAQGAGVTLPPTPSGSRTKQRLPGQKPFKRSLRGSDALSETSSVSHIEDLEKVERLSSGPEQITLEASSTEGHPGAPSPQHTDQTEAFQKGVPHPEDDHSQVEGPESLR</sequence>
<proteinExistence type="evidence at protein level"/>
<organism>
    <name type="scientific">Homo sapiens</name>
    <name type="common">Human</name>
    <dbReference type="NCBI Taxonomy" id="9606"/>
    <lineage>
        <taxon>Eukaryota</taxon>
        <taxon>Metazoa</taxon>
        <taxon>Chordata</taxon>
        <taxon>Craniata</taxon>
        <taxon>Vertebrata</taxon>
        <taxon>Euteleostomi</taxon>
        <taxon>Mammalia</taxon>
        <taxon>Eutheria</taxon>
        <taxon>Euarchontoglires</taxon>
        <taxon>Primates</taxon>
        <taxon>Haplorrhini</taxon>
        <taxon>Catarrhini</taxon>
        <taxon>Hominidae</taxon>
        <taxon>Homo</taxon>
    </lineage>
</organism>